<proteinExistence type="evidence at transcript level"/>
<comment type="function">
    <text evidence="2 3">Heterodimerizes with IL12B to form the IL-12 cytokine or with EBI3/IL27B to form the IL-35 cytokine. IL-12 is primarily produced by professional antigen-presenting cells (APCs) such as B-cells and dendritic cells (DCs) as well as macrophages and granulocytes and regulates T-cell and natural killer-cell responses, induces the production of interferon-gamma (IFN-gamma), favors the differentiation of T-helper 1 (Th1) cells and is an important link between innate resistance and adaptive immunity. Mechanistically, exerts its biological effects through a receptor composed of IL12R1 and IL12R2 subunits. Binding to the receptor results in the rapid tyrosine phosphorylation of a number of cellular substrates including the JAK family kinases TYK2 and JAK2. In turn, recruited STAT4 gets phosphorylated and translocates to the nucleus where it regulates cytokine/growth factor responsive genes (By similarity). As part of IL-35, plays essential roles in maintaining the immune homeostasis of the liver microenvironment and also functions as an immune-suppressive cytokine (By similarity). Mediates biological events through unconventional receptors composed of IL12RB2 and gp130/IL6ST heterodimers or homodimers. Signaling requires the transcription factors STAT1 and STAT4, which form a unique heterodimer that binds to distinct DNA sites (By similarity).</text>
</comment>
<comment type="subunit">
    <text evidence="2 3">Heterodimer with IL12B; disulfide-linked. This heterodimer is known as interleukin IL-12. Heterodimer with EBI3/IL27B; not disulfide-linked. This heterodimer is known as interleukin IL-35. Interacts with NBR1; this interaction promotes IL-12 secretion (By similarity).</text>
</comment>
<comment type="subcellular location">
    <subcellularLocation>
        <location evidence="2">Secreted</location>
    </subcellularLocation>
</comment>
<comment type="similarity">
    <text evidence="5">Belongs to the IL-6 superfamily.</text>
</comment>
<evidence type="ECO:0000250" key="1"/>
<evidence type="ECO:0000250" key="2">
    <source>
        <dbReference type="UniProtKB" id="P29459"/>
    </source>
</evidence>
<evidence type="ECO:0000250" key="3">
    <source>
        <dbReference type="UniProtKB" id="P43431"/>
    </source>
</evidence>
<evidence type="ECO:0000255" key="4"/>
<evidence type="ECO:0000305" key="5"/>
<dbReference type="EMBL" id="U14416">
    <property type="protein sequence ID" value="AAA85810.1"/>
    <property type="molecule type" value="mRNA"/>
</dbReference>
<dbReference type="EMBL" id="EU276075">
    <property type="protein sequence ID" value="ABX72073.1"/>
    <property type="molecule type" value="mRNA"/>
</dbReference>
<dbReference type="RefSeq" id="NP_776780.1">
    <property type="nucleotide sequence ID" value="NM_174355.2"/>
</dbReference>
<dbReference type="SMR" id="P54349"/>
<dbReference type="FunCoup" id="P54349">
    <property type="interactions" value="242"/>
</dbReference>
<dbReference type="STRING" id="9913.ENSBTAP00000072244"/>
<dbReference type="GlyCosmos" id="P54349">
    <property type="glycosylation" value="1 site, No reported glycans"/>
</dbReference>
<dbReference type="GlyGen" id="P54349">
    <property type="glycosylation" value="1 site"/>
</dbReference>
<dbReference type="PaxDb" id="9913-ENSBTAP00000020153"/>
<dbReference type="Ensembl" id="ENSBTAT00000070542.2">
    <property type="protein sequence ID" value="ENSBTAP00000058318.1"/>
    <property type="gene ID" value="ENSBTAG00000015150.7"/>
</dbReference>
<dbReference type="GeneID" id="281856"/>
<dbReference type="KEGG" id="bta:281856"/>
<dbReference type="CTD" id="3592"/>
<dbReference type="VEuPathDB" id="HostDB:ENSBTAG00000015150"/>
<dbReference type="VGNC" id="VGNC:30110">
    <property type="gene designation" value="IL12A"/>
</dbReference>
<dbReference type="eggNOG" id="ENOG502S8JN">
    <property type="taxonomic scope" value="Eukaryota"/>
</dbReference>
<dbReference type="GeneTree" id="ENSGT00390000016906"/>
<dbReference type="HOGENOM" id="CLU_108538_0_0_1"/>
<dbReference type="InParanoid" id="P54349"/>
<dbReference type="OrthoDB" id="9893660at2759"/>
<dbReference type="TreeFam" id="TF330814"/>
<dbReference type="Reactome" id="R-BTA-8984722">
    <property type="pathway name" value="Interleukin-35 Signalling"/>
</dbReference>
<dbReference type="Reactome" id="R-BTA-9020591">
    <property type="pathway name" value="Interleukin-12 signaling"/>
</dbReference>
<dbReference type="Proteomes" id="UP000009136">
    <property type="component" value="Chromosome 1"/>
</dbReference>
<dbReference type="Bgee" id="ENSBTAG00000015150">
    <property type="expression patterns" value="Expressed in spermatocyte and 56 other cell types or tissues"/>
</dbReference>
<dbReference type="GO" id="GO:0005615">
    <property type="term" value="C:extracellular space"/>
    <property type="evidence" value="ECO:0000314"/>
    <property type="project" value="AgBase"/>
</dbReference>
<dbReference type="GO" id="GO:0043514">
    <property type="term" value="C:interleukin-12 complex"/>
    <property type="evidence" value="ECO:0000318"/>
    <property type="project" value="GO_Central"/>
</dbReference>
<dbReference type="GO" id="GO:0005125">
    <property type="term" value="F:cytokine activity"/>
    <property type="evidence" value="ECO:0007669"/>
    <property type="project" value="UniProtKB-KW"/>
</dbReference>
<dbReference type="GO" id="GO:0008083">
    <property type="term" value="F:growth factor activity"/>
    <property type="evidence" value="ECO:0007669"/>
    <property type="project" value="UniProtKB-KW"/>
</dbReference>
<dbReference type="GO" id="GO:0005143">
    <property type="term" value="F:interleukin-12 receptor binding"/>
    <property type="evidence" value="ECO:0000314"/>
    <property type="project" value="UniProtKB"/>
</dbReference>
<dbReference type="GO" id="GO:0035722">
    <property type="term" value="P:interleukin-12-mediated signaling pathway"/>
    <property type="evidence" value="ECO:0000318"/>
    <property type="project" value="GO_Central"/>
</dbReference>
<dbReference type="GO" id="GO:0030101">
    <property type="term" value="P:natural killer cell activation"/>
    <property type="evidence" value="ECO:0000250"/>
    <property type="project" value="UniProtKB"/>
</dbReference>
<dbReference type="GO" id="GO:0042104">
    <property type="term" value="P:positive regulation of activated T cell proliferation"/>
    <property type="evidence" value="ECO:0000314"/>
    <property type="project" value="UniProtKB"/>
</dbReference>
<dbReference type="GO" id="GO:0032729">
    <property type="term" value="P:positive regulation of type II interferon production"/>
    <property type="evidence" value="ECO:0000314"/>
    <property type="project" value="UniProtKB"/>
</dbReference>
<dbReference type="GO" id="GO:0042093">
    <property type="term" value="P:T-helper cell differentiation"/>
    <property type="evidence" value="ECO:0000250"/>
    <property type="project" value="UniProtKB"/>
</dbReference>
<dbReference type="GO" id="GO:0032609">
    <property type="term" value="P:type II interferon production"/>
    <property type="evidence" value="ECO:0000314"/>
    <property type="project" value="AgBase"/>
</dbReference>
<dbReference type="FunFam" id="1.20.1250.10:FF:000020">
    <property type="entry name" value="Interleukin-12 subunit alpha"/>
    <property type="match status" value="1"/>
</dbReference>
<dbReference type="Gene3D" id="1.20.1250.10">
    <property type="match status" value="1"/>
</dbReference>
<dbReference type="InterPro" id="IPR009079">
    <property type="entry name" value="4_helix_cytokine-like_core"/>
</dbReference>
<dbReference type="InterPro" id="IPR050676">
    <property type="entry name" value="IL-12"/>
</dbReference>
<dbReference type="InterPro" id="IPR004281">
    <property type="entry name" value="IL-12_alpha"/>
</dbReference>
<dbReference type="PANTHER" id="PTHR48485:SF1">
    <property type="entry name" value="INTERLEUKIN-12 SUBUNIT ALPHA"/>
    <property type="match status" value="1"/>
</dbReference>
<dbReference type="PANTHER" id="PTHR48485">
    <property type="entry name" value="INTERLEUKIN-12 SUBUNIT BETA-RELATED"/>
    <property type="match status" value="1"/>
</dbReference>
<dbReference type="Pfam" id="PF03039">
    <property type="entry name" value="IL12"/>
    <property type="match status" value="1"/>
</dbReference>
<dbReference type="SUPFAM" id="SSF47266">
    <property type="entry name" value="4-helical cytokines"/>
    <property type="match status" value="1"/>
</dbReference>
<keyword id="KW-0202">Cytokine</keyword>
<keyword id="KW-1015">Disulfide bond</keyword>
<keyword id="KW-0325">Glycoprotein</keyword>
<keyword id="KW-0339">Growth factor</keyword>
<keyword id="KW-1185">Reference proteome</keyword>
<keyword id="KW-0964">Secreted</keyword>
<keyword id="KW-0732">Signal</keyword>
<reference key="1">
    <citation type="journal article" date="1995" name="Biochim. Biophys. Acta">
        <title>Enzymatic amplification and molecular cloning of cDNA encoding the small and large subunits of bovine interleukin 12.</title>
        <authorList>
            <person name="Zarlenga D.S."/>
            <person name="Canals A."/>
            <person name="Aschenbrenner R.A."/>
            <person name="Gasbarre L.C."/>
        </authorList>
    </citation>
    <scope>NUCLEOTIDE SEQUENCE [MRNA]</scope>
    <source>
        <strain>Holstein</strain>
        <tissue>Lymphoid tissue</tissue>
    </source>
</reference>
<reference key="2">
    <citation type="submission" date="2007-11" db="EMBL/GenBank/DDBJ databases">
        <title>U.S. veterinary immune reagent network: expressed bovine gene sequences.</title>
        <authorList>
            <consortium name="U.S. Veterinary Immune Reagent Network"/>
            <person name="Hudgens T."/>
            <person name="Tompkins D."/>
            <person name="Baldwin C.L."/>
        </authorList>
    </citation>
    <scope>NUCLEOTIDE SEQUENCE [LARGE SCALE MRNA]</scope>
    <source>
        <strain>Belted Galloway</strain>
        <tissue>Peripheral blood</tissue>
    </source>
</reference>
<organism>
    <name type="scientific">Bos taurus</name>
    <name type="common">Bovine</name>
    <dbReference type="NCBI Taxonomy" id="9913"/>
    <lineage>
        <taxon>Eukaryota</taxon>
        <taxon>Metazoa</taxon>
        <taxon>Chordata</taxon>
        <taxon>Craniata</taxon>
        <taxon>Vertebrata</taxon>
        <taxon>Euteleostomi</taxon>
        <taxon>Mammalia</taxon>
        <taxon>Eutheria</taxon>
        <taxon>Laurasiatheria</taxon>
        <taxon>Artiodactyla</taxon>
        <taxon>Ruminantia</taxon>
        <taxon>Pecora</taxon>
        <taxon>Bovidae</taxon>
        <taxon>Bovinae</taxon>
        <taxon>Bos</taxon>
    </lineage>
</organism>
<name>IL12A_BOVIN</name>
<sequence length="221" mass="24944">MCPLRSLLLISTLVLLHHLPHLSLGRSLPTTTASPGRSCLDYSQNLLRAVSNTLQKARQTLEFYSCTSEEIDHEDITKDKTSTVEACLPLELATNESCLASRETSFITNGHCLASGKTSFMTTLCLRSIYEDLKMYHVEFQAMNAKLLMDPKRQIFLDQNMLAAIAELMQALNFDSETVPQKPSLKELDFYKTKVKLCILLHAFRIRAVTIDRMMSYLSSS</sequence>
<gene>
    <name type="primary">IL12A</name>
</gene>
<protein>
    <recommendedName>
        <fullName>Interleukin-12 subunit alpha</fullName>
        <shortName>IL-12A</shortName>
    </recommendedName>
    <alternativeName>
        <fullName>Cytotoxic lymphocyte maturation factor 35 kDa subunit</fullName>
        <shortName>CLMF p35</shortName>
    </alternativeName>
    <alternativeName>
        <fullName>IL-12 subunit p35</fullName>
    </alternativeName>
</protein>
<accession>P54349</accession>
<accession>A9QWR3</accession>
<feature type="signal peptide" evidence="1">
    <location>
        <begin position="1"/>
        <end position="25"/>
    </location>
</feature>
<feature type="chain" id="PRO_0000015597" description="Interleukin-12 subunit alpha">
    <location>
        <begin position="26"/>
        <end position="221"/>
    </location>
</feature>
<feature type="glycosylation site" description="N-linked (GlcNAc...) asparagine" evidence="4">
    <location>
        <position position="95"/>
    </location>
</feature>
<feature type="disulfide bond" evidence="2">
    <location>
        <begin position="39"/>
        <end position="112"/>
    </location>
</feature>
<feature type="disulfide bond" evidence="1">
    <location>
        <begin position="66"/>
        <end position="198"/>
    </location>
</feature>
<feature type="disulfide bond" evidence="1">
    <location>
        <begin position="87"/>
        <end position="125"/>
    </location>
</feature>
<feature type="disulfide bond" description="Interchain (with C-200 in IL12B)" evidence="1">
    <location>
        <position position="98"/>
    </location>
</feature>